<feature type="transit peptide" description="Mitochondrion" evidence="5">
    <location>
        <begin position="1"/>
        <end position="22"/>
    </location>
</feature>
<feature type="chain" id="PRO_0000421770" description="ATPase inhibitor, mitochondrial">
    <location>
        <begin position="23"/>
        <end position="109"/>
    </location>
</feature>
<feature type="region of interest" description="Disordered" evidence="6">
    <location>
        <begin position="27"/>
        <end position="109"/>
    </location>
</feature>
<feature type="region of interest" description="N-terminal inhibitory region" evidence="1">
    <location>
        <begin position="27"/>
        <end position="56"/>
    </location>
</feature>
<feature type="region of interest" description="Antiparallel alpha-helical coiled coil region" evidence="1">
    <location>
        <begin position="78"/>
        <end position="109"/>
    </location>
</feature>
<feature type="coiled-coil region" evidence="5">
    <location>
        <begin position="71"/>
        <end position="109"/>
    </location>
</feature>
<feature type="compositionally biased region" description="Gly residues" evidence="6">
    <location>
        <begin position="30"/>
        <end position="43"/>
    </location>
</feature>
<feature type="compositionally biased region" description="Basic and acidic residues" evidence="6">
    <location>
        <begin position="55"/>
        <end position="69"/>
    </location>
</feature>
<feature type="compositionally biased region" description="Basic and acidic residues" evidence="6">
    <location>
        <begin position="77"/>
        <end position="98"/>
    </location>
</feature>
<feature type="compositionally biased region" description="Basic residues" evidence="6">
    <location>
        <begin position="99"/>
        <end position="109"/>
    </location>
</feature>
<feature type="sequence conflict" description="In Ref. 2; AAI68056." evidence="7" ref="2">
    <original>R</original>
    <variation>H</variation>
    <location>
        <position position="83"/>
    </location>
</feature>
<sequence>MAGSSSLLRAGIRNVLLMQMRRSSDQLGELGKGAGKGGGGGGSVREAGGAFGKRQAAEEERYFRQKEQEQIASLRKHHEEEIRHHKGEIERLQKEIERHKSKIKKLNDD</sequence>
<gene>
    <name evidence="4" type="primary">atp5if1</name>
    <name type="synonym">atpi</name>
    <name type="synonym">atpif1</name>
</gene>
<accession>F7BK26</accession>
<accession>B4F6Y2</accession>
<protein>
    <recommendedName>
        <fullName evidence="7">ATPase inhibitor, mitochondrial</fullName>
    </recommendedName>
    <alternativeName>
        <fullName evidence="4">ATP synthase F1 subunit epsilon</fullName>
    </alternativeName>
    <alternativeName>
        <fullName>Inhibitor of F(1)F(o)-ATPase</fullName>
        <shortName>IF(1)</shortName>
        <shortName>IF1</shortName>
    </alternativeName>
</protein>
<proteinExistence type="inferred from homology"/>
<dbReference type="EMBL" id="AAMC01085068">
    <property type="status" value="NOT_ANNOTATED_CDS"/>
    <property type="molecule type" value="Genomic_DNA"/>
</dbReference>
<dbReference type="EMBL" id="BC168056">
    <property type="protein sequence ID" value="AAI68056.1"/>
    <property type="molecule type" value="mRNA"/>
</dbReference>
<dbReference type="RefSeq" id="NP_001135565.1">
    <property type="nucleotide sequence ID" value="NM_001142093.1"/>
</dbReference>
<dbReference type="SMR" id="F7BK26"/>
<dbReference type="STRING" id="8364.ENSXETP00000050386"/>
<dbReference type="PaxDb" id="8364-ENSXETP00000015454"/>
<dbReference type="GeneID" id="100216112"/>
<dbReference type="KEGG" id="xtr:100216112"/>
<dbReference type="AGR" id="Xenbase:XB-GENE-956790"/>
<dbReference type="CTD" id="93974"/>
<dbReference type="Xenbase" id="XB-GENE-956790">
    <property type="gene designation" value="atp5if1"/>
</dbReference>
<dbReference type="eggNOG" id="ENOG502S4JP">
    <property type="taxonomic scope" value="Eukaryota"/>
</dbReference>
<dbReference type="HOGENOM" id="CLU_147479_1_2_1"/>
<dbReference type="InParanoid" id="F7BK26"/>
<dbReference type="TreeFam" id="TF320659"/>
<dbReference type="Proteomes" id="UP000008143">
    <property type="component" value="Chromosome 2"/>
</dbReference>
<dbReference type="Bgee" id="ENSXETG00000007103">
    <property type="expression patterns" value="Expressed in testis and 13 other cell types or tissues"/>
</dbReference>
<dbReference type="GO" id="GO:0005739">
    <property type="term" value="C:mitochondrion"/>
    <property type="evidence" value="ECO:0007669"/>
    <property type="project" value="UniProtKB-SubCell"/>
</dbReference>
<dbReference type="GO" id="GO:0051117">
    <property type="term" value="F:ATPase binding"/>
    <property type="evidence" value="ECO:0000250"/>
    <property type="project" value="UniProtKB"/>
</dbReference>
<dbReference type="GO" id="GO:0042030">
    <property type="term" value="F:ATPase inhibitor activity"/>
    <property type="evidence" value="ECO:0000250"/>
    <property type="project" value="UniProtKB"/>
</dbReference>
<dbReference type="GO" id="GO:0042803">
    <property type="term" value="F:protein homodimerization activity"/>
    <property type="evidence" value="ECO:0000250"/>
    <property type="project" value="UniProtKB"/>
</dbReference>
<dbReference type="GO" id="GO:0030218">
    <property type="term" value="P:erythrocyte differentiation"/>
    <property type="evidence" value="ECO:0000250"/>
    <property type="project" value="UniProtKB"/>
</dbReference>
<dbReference type="GO" id="GO:0006783">
    <property type="term" value="P:heme biosynthetic process"/>
    <property type="evidence" value="ECO:0000250"/>
    <property type="project" value="UniProtKB"/>
</dbReference>
<dbReference type="GO" id="GO:1905707">
    <property type="term" value="P:negative regulation of mitochondrial ATP synthesis coupled proton transport"/>
    <property type="evidence" value="ECO:0000250"/>
    <property type="project" value="UniProtKB"/>
</dbReference>
<dbReference type="GO" id="GO:0051289">
    <property type="term" value="P:protein homotetramerization"/>
    <property type="evidence" value="ECO:0000250"/>
    <property type="project" value="UniProtKB"/>
</dbReference>
<dbReference type="FunFam" id="1.20.5.500:FF:000004">
    <property type="entry name" value="ATPase inhibitor A, mitochondrial"/>
    <property type="match status" value="1"/>
</dbReference>
<dbReference type="FunFam" id="1.20.5.500:FF:000003">
    <property type="entry name" value="ATPase inhibitor B, mitochondrial"/>
    <property type="match status" value="1"/>
</dbReference>
<dbReference type="Gene3D" id="1.20.5.500">
    <property type="entry name" value="Single helix bin"/>
    <property type="match status" value="2"/>
</dbReference>
<dbReference type="InterPro" id="IPR007648">
    <property type="entry name" value="ATPase_inhibitor_mt"/>
</dbReference>
<dbReference type="PANTHER" id="PTHR48417">
    <property type="entry name" value="ATP SYNTHASE F1 SUBUNIT EPSILON"/>
    <property type="match status" value="1"/>
</dbReference>
<dbReference type="PANTHER" id="PTHR48417:SF1">
    <property type="entry name" value="ATP SYNTHASE F1 SUBUNIT EPSILON"/>
    <property type="match status" value="1"/>
</dbReference>
<dbReference type="Pfam" id="PF04568">
    <property type="entry name" value="IATP"/>
    <property type="match status" value="1"/>
</dbReference>
<dbReference type="SUPFAM" id="SSF64602">
    <property type="entry name" value="F1 ATPase inhibitor, IF1, C-terminal domain"/>
    <property type="match status" value="1"/>
</dbReference>
<keyword id="KW-0175">Coiled coil</keyword>
<keyword id="KW-0496">Mitochondrion</keyword>
<keyword id="KW-1185">Reference proteome</keyword>
<keyword id="KW-0809">Transit peptide</keyword>
<organism>
    <name type="scientific">Xenopus tropicalis</name>
    <name type="common">Western clawed frog</name>
    <name type="synonym">Silurana tropicalis</name>
    <dbReference type="NCBI Taxonomy" id="8364"/>
    <lineage>
        <taxon>Eukaryota</taxon>
        <taxon>Metazoa</taxon>
        <taxon>Chordata</taxon>
        <taxon>Craniata</taxon>
        <taxon>Vertebrata</taxon>
        <taxon>Euteleostomi</taxon>
        <taxon>Amphibia</taxon>
        <taxon>Batrachia</taxon>
        <taxon>Anura</taxon>
        <taxon>Pipoidea</taxon>
        <taxon>Pipidae</taxon>
        <taxon>Xenopodinae</taxon>
        <taxon>Xenopus</taxon>
        <taxon>Silurana</taxon>
    </lineage>
</organism>
<evidence type="ECO:0000250" key="1"/>
<evidence type="ECO:0000250" key="2">
    <source>
        <dbReference type="UniProtKB" id="A3KNL5"/>
    </source>
</evidence>
<evidence type="ECO:0000250" key="3">
    <source>
        <dbReference type="UniProtKB" id="P01096"/>
    </source>
</evidence>
<evidence type="ECO:0000250" key="4">
    <source>
        <dbReference type="UniProtKB" id="Q9UII2"/>
    </source>
</evidence>
<evidence type="ECO:0000255" key="5"/>
<evidence type="ECO:0000256" key="6">
    <source>
        <dbReference type="SAM" id="MobiDB-lite"/>
    </source>
</evidence>
<evidence type="ECO:0000305" key="7"/>
<name>ATIF1_XENTR</name>
<comment type="function">
    <text evidence="2 3">Endogenous F(1)F(o)-ATPase inhibitor limiting ATP depletion when the mitochondrial membrane potential falls below a threshold and the F(1)F(o)-ATP synthase starts hydrolyzing ATP to pump protons out of the mitochondrial matrix. Required to avoid the consumption of cellular ATP when the F(1)F(o)-ATP synthase enzyme acts as an ATP hydrolase (By similarity). Indirectly acts as a regulator of heme synthesis in erythroid tissues: regulates heme synthesis by modulating the mitochondrial pH and redox potential, allowing fech to efficiently catalyze the incorporation of iron into protoporphyrin IX to produce heme (By similarity).</text>
</comment>
<comment type="subunit">
    <text evidence="1">Homodimer; represents the active form and is present at a pH value below 6.5. Homotetramer; represents the inactive form and is present at a pH value above 7.0 (By similarity).</text>
</comment>
<comment type="subcellular location">
    <subcellularLocation>
        <location evidence="1">Mitochondrion</location>
    </subcellularLocation>
</comment>
<comment type="domain">
    <text evidence="1">Forms an alpha-helical dimer with monomers associated via an antiparallel alpha-helical coiled coil composed of residues 78-109, leaving each N-terminal inhibitory region (residues 27-56) accessible for interaction with an F1 catalytic domain. The inhibitory N-terminal region (residues 27-56) binds the alpha(ADP-bound)-beta(ADP-bound) (ATP5F1A-ATP5F1B) interface of F1-ATPase, and also contact the central gamma subunit (ATP5F1C). This dimeric state is favored by pH values below 7.0, and at higher values the dimers associate to form inactive homotetramer, where the inhibitory region is occluded, masking its inhibitory activity (By similarity).</text>
</comment>
<comment type="similarity">
    <text evidence="7">Belongs to the ATPase inhibitor family.</text>
</comment>
<reference key="1">
    <citation type="journal article" date="2010" name="Science">
        <title>The genome of the Western clawed frog Xenopus tropicalis.</title>
        <authorList>
            <person name="Hellsten U."/>
            <person name="Harland R.M."/>
            <person name="Gilchrist M.J."/>
            <person name="Hendrix D."/>
            <person name="Jurka J."/>
            <person name="Kapitonov V."/>
            <person name="Ovcharenko I."/>
            <person name="Putnam N.H."/>
            <person name="Shu S."/>
            <person name="Taher L."/>
            <person name="Blitz I.L."/>
            <person name="Blumberg B."/>
            <person name="Dichmann D.S."/>
            <person name="Dubchak I."/>
            <person name="Amaya E."/>
            <person name="Detter J.C."/>
            <person name="Fletcher R."/>
            <person name="Gerhard D.S."/>
            <person name="Goodstein D."/>
            <person name="Graves T."/>
            <person name="Grigoriev I.V."/>
            <person name="Grimwood J."/>
            <person name="Kawashima T."/>
            <person name="Lindquist E."/>
            <person name="Lucas S.M."/>
            <person name="Mead P.E."/>
            <person name="Mitros T."/>
            <person name="Ogino H."/>
            <person name="Ohta Y."/>
            <person name="Poliakov A.V."/>
            <person name="Pollet N."/>
            <person name="Robert J."/>
            <person name="Salamov A."/>
            <person name="Sater A.K."/>
            <person name="Schmutz J."/>
            <person name="Terry A."/>
            <person name="Vize P.D."/>
            <person name="Warren W.C."/>
            <person name="Wells D."/>
            <person name="Wills A."/>
            <person name="Wilson R.K."/>
            <person name="Zimmerman L.B."/>
            <person name="Zorn A.M."/>
            <person name="Grainger R."/>
            <person name="Grammer T."/>
            <person name="Khokha M.K."/>
            <person name="Richardson P.M."/>
            <person name="Rokhsar D.S."/>
        </authorList>
    </citation>
    <scope>NUCLEOTIDE SEQUENCE [LARGE SCALE GENOMIC DNA]</scope>
</reference>
<reference key="2">
    <citation type="submission" date="2008-07" db="EMBL/GenBank/DDBJ databases">
        <authorList>
            <consortium name="NIH - Xenopus Gene Collection (XGC) project"/>
        </authorList>
    </citation>
    <scope>NUCLEOTIDE SEQUENCE [LARGE SCALE MRNA]</scope>
    <source>
        <strain>TGA IC</strain>
        <tissue>Bone</tissue>
    </source>
</reference>